<gene>
    <name evidence="1" type="primary">cobT</name>
    <name type="ordered locus">E2348C_2124</name>
</gene>
<keyword id="KW-0169">Cobalamin biosynthesis</keyword>
<keyword id="KW-0328">Glycosyltransferase</keyword>
<keyword id="KW-1185">Reference proteome</keyword>
<keyword id="KW-0808">Transferase</keyword>
<accession>B7UT20</accession>
<dbReference type="EC" id="2.4.2.21" evidence="1"/>
<dbReference type="EMBL" id="FM180568">
    <property type="protein sequence ID" value="CAS09672.1"/>
    <property type="molecule type" value="Genomic_DNA"/>
</dbReference>
<dbReference type="RefSeq" id="WP_001166145.1">
    <property type="nucleotide sequence ID" value="NC_011601.1"/>
</dbReference>
<dbReference type="SMR" id="B7UT20"/>
<dbReference type="KEGG" id="ecg:E2348C_2124"/>
<dbReference type="HOGENOM" id="CLU_002982_0_0_6"/>
<dbReference type="UniPathway" id="UPA00061">
    <property type="reaction ID" value="UER00516"/>
</dbReference>
<dbReference type="Proteomes" id="UP000008205">
    <property type="component" value="Chromosome"/>
</dbReference>
<dbReference type="GO" id="GO:0008939">
    <property type="term" value="F:nicotinate-nucleotide-dimethylbenzimidazole phosphoribosyltransferase activity"/>
    <property type="evidence" value="ECO:0007669"/>
    <property type="project" value="UniProtKB-UniRule"/>
</dbReference>
<dbReference type="GO" id="GO:0009236">
    <property type="term" value="P:cobalamin biosynthetic process"/>
    <property type="evidence" value="ECO:0007669"/>
    <property type="project" value="UniProtKB-KW"/>
</dbReference>
<dbReference type="CDD" id="cd02439">
    <property type="entry name" value="DMB-PRT_CobT"/>
    <property type="match status" value="1"/>
</dbReference>
<dbReference type="FunFam" id="1.10.1610.10:FF:000001">
    <property type="entry name" value="Nicotinate-nucleotide--dimethylbenzimidazole phosphoribosyltransferase"/>
    <property type="match status" value="1"/>
</dbReference>
<dbReference type="FunFam" id="3.40.50.10210:FF:000001">
    <property type="entry name" value="Nicotinate-nucleotide--dimethylbenzimidazole phosphoribosyltransferase"/>
    <property type="match status" value="1"/>
</dbReference>
<dbReference type="Gene3D" id="1.10.1610.10">
    <property type="match status" value="1"/>
</dbReference>
<dbReference type="Gene3D" id="3.40.50.10210">
    <property type="match status" value="1"/>
</dbReference>
<dbReference type="HAMAP" id="MF_00230">
    <property type="entry name" value="CobT"/>
    <property type="match status" value="1"/>
</dbReference>
<dbReference type="InterPro" id="IPR003200">
    <property type="entry name" value="Nict_dMeBzImd_PRibTrfase"/>
</dbReference>
<dbReference type="InterPro" id="IPR017846">
    <property type="entry name" value="Nict_dMeBzImd_PRibTrfase_bact"/>
</dbReference>
<dbReference type="InterPro" id="IPR023195">
    <property type="entry name" value="Nict_dMeBzImd_PRibTrfase_N"/>
</dbReference>
<dbReference type="InterPro" id="IPR036087">
    <property type="entry name" value="Nict_dMeBzImd_PRibTrfase_sf"/>
</dbReference>
<dbReference type="NCBIfam" id="TIGR03160">
    <property type="entry name" value="cobT_DBIPRT"/>
    <property type="match status" value="1"/>
</dbReference>
<dbReference type="NCBIfam" id="NF000996">
    <property type="entry name" value="PRK00105.1"/>
    <property type="match status" value="1"/>
</dbReference>
<dbReference type="PANTHER" id="PTHR43463">
    <property type="entry name" value="NICOTINATE-NUCLEOTIDE--DIMETHYLBENZIMIDAZOLE PHOSPHORIBOSYLTRANSFERASE"/>
    <property type="match status" value="1"/>
</dbReference>
<dbReference type="PANTHER" id="PTHR43463:SF1">
    <property type="entry name" value="NICOTINATE-NUCLEOTIDE--DIMETHYLBENZIMIDAZOLE PHOSPHORIBOSYLTRANSFERASE"/>
    <property type="match status" value="1"/>
</dbReference>
<dbReference type="Pfam" id="PF02277">
    <property type="entry name" value="DBI_PRT"/>
    <property type="match status" value="1"/>
</dbReference>
<dbReference type="SUPFAM" id="SSF52733">
    <property type="entry name" value="Nicotinate mononucleotide:5,6-dimethylbenzimidazole phosphoribosyltransferase (CobT)"/>
    <property type="match status" value="1"/>
</dbReference>
<evidence type="ECO:0000255" key="1">
    <source>
        <dbReference type="HAMAP-Rule" id="MF_00230"/>
    </source>
</evidence>
<feature type="chain" id="PRO_1000125104" description="Nicotinate-nucleotide--dimethylbenzimidazole phosphoribosyltransferase">
    <location>
        <begin position="1"/>
        <end position="359"/>
    </location>
</feature>
<feature type="active site" description="Proton acceptor" evidence="1">
    <location>
        <position position="318"/>
    </location>
</feature>
<comment type="function">
    <text evidence="1">Catalyzes the synthesis of alpha-ribazole-5'-phosphate from nicotinate mononucleotide (NAMN) and 5,6-dimethylbenzimidazole (DMB).</text>
</comment>
<comment type="catalytic activity">
    <reaction evidence="1">
        <text>5,6-dimethylbenzimidazole + nicotinate beta-D-ribonucleotide = alpha-ribazole 5'-phosphate + nicotinate + H(+)</text>
        <dbReference type="Rhea" id="RHEA:11196"/>
        <dbReference type="ChEBI" id="CHEBI:15378"/>
        <dbReference type="ChEBI" id="CHEBI:15890"/>
        <dbReference type="ChEBI" id="CHEBI:32544"/>
        <dbReference type="ChEBI" id="CHEBI:57502"/>
        <dbReference type="ChEBI" id="CHEBI:57918"/>
        <dbReference type="EC" id="2.4.2.21"/>
    </reaction>
</comment>
<comment type="pathway">
    <text evidence="1">Nucleoside biosynthesis; alpha-ribazole biosynthesis; alpha-ribazole from 5,6-dimethylbenzimidazole: step 1/2.</text>
</comment>
<comment type="subunit">
    <text evidence="1">Homodimer.</text>
</comment>
<comment type="similarity">
    <text evidence="1">Belongs to the CobT family.</text>
</comment>
<proteinExistence type="inferred from homology"/>
<organism>
    <name type="scientific">Escherichia coli O127:H6 (strain E2348/69 / EPEC)</name>
    <dbReference type="NCBI Taxonomy" id="574521"/>
    <lineage>
        <taxon>Bacteria</taxon>
        <taxon>Pseudomonadati</taxon>
        <taxon>Pseudomonadota</taxon>
        <taxon>Gammaproteobacteria</taxon>
        <taxon>Enterobacterales</taxon>
        <taxon>Enterobacteriaceae</taxon>
        <taxon>Escherichia</taxon>
    </lineage>
</organism>
<sequence>MQILADLLNTIPAIDPAAMSRAQRHIDGLLKPVGSLGKLEALAIQLAGMPGLNGIPHVGKKAILVMCADHGVWEEGVAISPKEVTAIQAENMTRGTTGVCVLAAQAGANVHVIDVGIDTAEPIPGLINMRVARGSGNIASAPAMSRRQAEKLLLDVICYTRELAKNGVTLFGVGELGMANTTPAAAIVSTITGWDPEEVVGIGANLPTDKLANKIDVVRRAITLNQPNPQDGVDVLAKVGGFDLVGIAGVMLGAASCGLPVLLDGFLSYAAALAACQMSPAIKPYLIPSHLSAEKGARIALSHLGLEPYLNMDMRLGEGSGAALAMPIIEAACAIYNNMGELAASNIVLPGNTTSDLNS</sequence>
<name>COBT_ECO27</name>
<reference key="1">
    <citation type="journal article" date="2009" name="J. Bacteriol.">
        <title>Complete genome sequence and comparative genome analysis of enteropathogenic Escherichia coli O127:H6 strain E2348/69.</title>
        <authorList>
            <person name="Iguchi A."/>
            <person name="Thomson N.R."/>
            <person name="Ogura Y."/>
            <person name="Saunders D."/>
            <person name="Ooka T."/>
            <person name="Henderson I.R."/>
            <person name="Harris D."/>
            <person name="Asadulghani M."/>
            <person name="Kurokawa K."/>
            <person name="Dean P."/>
            <person name="Kenny B."/>
            <person name="Quail M.A."/>
            <person name="Thurston S."/>
            <person name="Dougan G."/>
            <person name="Hayashi T."/>
            <person name="Parkhill J."/>
            <person name="Frankel G."/>
        </authorList>
    </citation>
    <scope>NUCLEOTIDE SEQUENCE [LARGE SCALE GENOMIC DNA]</scope>
    <source>
        <strain>E2348/69 / EPEC</strain>
    </source>
</reference>
<protein>
    <recommendedName>
        <fullName evidence="1">Nicotinate-nucleotide--dimethylbenzimidazole phosphoribosyltransferase</fullName>
        <shortName evidence="1">NN:DBI PRT</shortName>
        <ecNumber evidence="1">2.4.2.21</ecNumber>
    </recommendedName>
    <alternativeName>
        <fullName evidence="1">N(1)-alpha-phosphoribosyltransferase</fullName>
    </alternativeName>
</protein>